<keyword id="KW-0997">Cell inner membrane</keyword>
<keyword id="KW-1003">Cell membrane</keyword>
<keyword id="KW-0472">Membrane</keyword>
<keyword id="KW-0812">Transmembrane</keyword>
<keyword id="KW-1133">Transmembrane helix</keyword>
<proteinExistence type="inferred from homology"/>
<accession>A6T022</accession>
<gene>
    <name type="ordered locus">mma_2179</name>
</gene>
<organism>
    <name type="scientific">Janthinobacterium sp. (strain Marseille)</name>
    <name type="common">Minibacterium massiliensis</name>
    <dbReference type="NCBI Taxonomy" id="375286"/>
    <lineage>
        <taxon>Bacteria</taxon>
        <taxon>Pseudomonadati</taxon>
        <taxon>Pseudomonadota</taxon>
        <taxon>Betaproteobacteria</taxon>
        <taxon>Burkholderiales</taxon>
        <taxon>Oxalobacteraceae</taxon>
        <taxon>Janthinobacterium</taxon>
    </lineage>
</organism>
<feature type="chain" id="PRO_0000391035" description="UPF0761 membrane protein mma_2179">
    <location>
        <begin position="1"/>
        <end position="435"/>
    </location>
</feature>
<feature type="transmembrane region" description="Helical" evidence="1">
    <location>
        <begin position="45"/>
        <end position="65"/>
    </location>
</feature>
<feature type="transmembrane region" description="Helical" evidence="1">
    <location>
        <begin position="103"/>
        <end position="123"/>
    </location>
</feature>
<feature type="transmembrane region" description="Helical" evidence="1">
    <location>
        <begin position="142"/>
        <end position="162"/>
    </location>
</feature>
<feature type="transmembrane region" description="Helical" evidence="1">
    <location>
        <begin position="177"/>
        <end position="197"/>
    </location>
</feature>
<feature type="transmembrane region" description="Helical" evidence="1">
    <location>
        <begin position="208"/>
        <end position="228"/>
    </location>
</feature>
<feature type="transmembrane region" description="Helical" evidence="1">
    <location>
        <begin position="252"/>
        <end position="272"/>
    </location>
</feature>
<reference key="1">
    <citation type="journal article" date="2007" name="PLoS Genet.">
        <title>Genome analysis of Minibacterium massiliensis highlights the convergent evolution of water-living bacteria.</title>
        <authorList>
            <person name="Audic S."/>
            <person name="Robert C."/>
            <person name="Campagna B."/>
            <person name="Parinello H."/>
            <person name="Claverie J.-M."/>
            <person name="Raoult D."/>
            <person name="Drancourt M."/>
        </authorList>
    </citation>
    <scope>NUCLEOTIDE SEQUENCE [LARGE SCALE GENOMIC DNA]</scope>
    <source>
        <strain>Marseille</strain>
    </source>
</reference>
<dbReference type="EMBL" id="CP000269">
    <property type="protein sequence ID" value="ABR89343.1"/>
    <property type="molecule type" value="Genomic_DNA"/>
</dbReference>
<dbReference type="RefSeq" id="WP_012080032.1">
    <property type="nucleotide sequence ID" value="NC_009659.1"/>
</dbReference>
<dbReference type="SMR" id="A6T022"/>
<dbReference type="STRING" id="375286.mma_2179"/>
<dbReference type="KEGG" id="mms:mma_2179"/>
<dbReference type="eggNOG" id="COG1295">
    <property type="taxonomic scope" value="Bacteria"/>
</dbReference>
<dbReference type="HOGENOM" id="CLU_032288_1_2_4"/>
<dbReference type="OrthoDB" id="9808671at2"/>
<dbReference type="Proteomes" id="UP000006388">
    <property type="component" value="Chromosome"/>
</dbReference>
<dbReference type="GO" id="GO:0005886">
    <property type="term" value="C:plasma membrane"/>
    <property type="evidence" value="ECO:0007669"/>
    <property type="project" value="UniProtKB-SubCell"/>
</dbReference>
<dbReference type="HAMAP" id="MF_00672">
    <property type="entry name" value="UPF0761"/>
    <property type="match status" value="1"/>
</dbReference>
<dbReference type="InterPro" id="IPR023679">
    <property type="entry name" value="UPF0761_bac"/>
</dbReference>
<dbReference type="InterPro" id="IPR017039">
    <property type="entry name" value="Virul_fac_BrkB"/>
</dbReference>
<dbReference type="NCBIfam" id="TIGR00765">
    <property type="entry name" value="yihY_not_rbn"/>
    <property type="match status" value="1"/>
</dbReference>
<dbReference type="PANTHER" id="PTHR30213">
    <property type="entry name" value="INNER MEMBRANE PROTEIN YHJD"/>
    <property type="match status" value="1"/>
</dbReference>
<dbReference type="PANTHER" id="PTHR30213:SF0">
    <property type="entry name" value="UPF0761 MEMBRANE PROTEIN YIHY"/>
    <property type="match status" value="1"/>
</dbReference>
<dbReference type="Pfam" id="PF03631">
    <property type="entry name" value="Virul_fac_BrkB"/>
    <property type="match status" value="1"/>
</dbReference>
<protein>
    <recommendedName>
        <fullName evidence="1">UPF0761 membrane protein mma_2179</fullName>
    </recommendedName>
</protein>
<sequence length="435" mass="48478">MKLAIVPFFRELTWSQVRNLFHFAARRLTEERLPQVAGSLTFTTVLALVPILTIALAIFTTFPLFNTFRTSLEAYFVHNLMPKGIANTILGYLTQFSSKATRLSAFGAVALIVTAVAMMLMIDRVFNQIWRVKTKRPIVQRILVYWAIVTLGPLLIGASMTFTSYLFTATDGVVRGVPFVGAVFYTSISILLSMVAFTSLYIVVPNRLVEWRDAVVGGLLAAIAFEIVKRLFAAFVIKVPTYTVVYGAVAAFPIFLVWVYLGWLITLAGAVVTAALPIVKYERWWHVPQPGSAFVDAMALIAVLYEARASADSAVVDTKLLRDRTQLGFDESEALLEKMLDAGWVARLKSEGPKRMQWGKRITDGLDRWVLLANPEYLTLADVYRVFVFDAGGNEMLAKKVECAVEQGLYQSLANYFRESSEGDLPGQHLPVHQP</sequence>
<name>Y2179_JANMA</name>
<evidence type="ECO:0000255" key="1">
    <source>
        <dbReference type="HAMAP-Rule" id="MF_00672"/>
    </source>
</evidence>
<comment type="subcellular location">
    <subcellularLocation>
        <location evidence="1">Cell inner membrane</location>
        <topology evidence="1">Multi-pass membrane protein</topology>
    </subcellularLocation>
</comment>
<comment type="similarity">
    <text evidence="1">Belongs to the UPF0761 family.</text>
</comment>